<protein>
    <recommendedName>
        <fullName>Putative F-box protein At3g21130</fullName>
    </recommendedName>
</protein>
<keyword id="KW-1185">Reference proteome</keyword>
<proteinExistence type="predicted"/>
<evidence type="ECO:0000255" key="1">
    <source>
        <dbReference type="PROSITE-ProRule" id="PRU00080"/>
    </source>
</evidence>
<organism>
    <name type="scientific">Arabidopsis thaliana</name>
    <name type="common">Mouse-ear cress</name>
    <dbReference type="NCBI Taxonomy" id="3702"/>
    <lineage>
        <taxon>Eukaryota</taxon>
        <taxon>Viridiplantae</taxon>
        <taxon>Streptophyta</taxon>
        <taxon>Embryophyta</taxon>
        <taxon>Tracheophyta</taxon>
        <taxon>Spermatophyta</taxon>
        <taxon>Magnoliopsida</taxon>
        <taxon>eudicotyledons</taxon>
        <taxon>Gunneridae</taxon>
        <taxon>Pentapetalae</taxon>
        <taxon>rosids</taxon>
        <taxon>malvids</taxon>
        <taxon>Brassicales</taxon>
        <taxon>Brassicaceae</taxon>
        <taxon>Camelineae</taxon>
        <taxon>Arabidopsis</taxon>
    </lineage>
</organism>
<sequence length="367" mass="42119">MMKKRNTVYLSEDLIVEILSRVSAVSLARLRTTSKRWNALVKDERLAKKHSAYAPRQSLVITLIDSRVYLMNVSLQYGIEKVDLSAKLTGQFSLKDPLSNSLEEVDIRNVFHCDGLLLCSTKDNRLVVWNPCSGETRWIQPRSSYKVSDIYALGYDNTSSCHKILRMDRSEDRIPIQTEYQVYDFTSKSWLVDGVAGGLFIPSIGTRRRGLSVKGNTYWLALTEDGPPFDMFLLCFDFSTDGFRRLSLPTDTPCTYYDVSLSVTREEQQLCMFKSHGSELWIATKMESTGAISWSKSHRFHFRIDEMTVLADQEKPVFVYRFKPKSNMLHIVGEHIYIIQVDQHSADSKCPYLLTYVPSLVQIQQSI</sequence>
<dbReference type="EMBL" id="AP000604">
    <property type="protein sequence ID" value="BAB01456.1"/>
    <property type="molecule type" value="Genomic_DNA"/>
</dbReference>
<dbReference type="EMBL" id="CP002686">
    <property type="protein sequence ID" value="AEE76465.1"/>
    <property type="molecule type" value="Genomic_DNA"/>
</dbReference>
<dbReference type="RefSeq" id="NP_188750.1">
    <property type="nucleotide sequence ID" value="NM_113007.1"/>
</dbReference>
<dbReference type="BioGRID" id="6997">
    <property type="interactions" value="9"/>
</dbReference>
<dbReference type="PaxDb" id="3702-AT3G21130.1"/>
<dbReference type="EnsemblPlants" id="AT3G21130.1">
    <property type="protein sequence ID" value="AT3G21130.1"/>
    <property type="gene ID" value="AT3G21130"/>
</dbReference>
<dbReference type="GeneID" id="821665"/>
<dbReference type="Gramene" id="AT3G21130.1">
    <property type="protein sequence ID" value="AT3G21130.1"/>
    <property type="gene ID" value="AT3G21130"/>
</dbReference>
<dbReference type="KEGG" id="ath:AT3G21130"/>
<dbReference type="Araport" id="AT3G21130"/>
<dbReference type="TAIR" id="AT3G21130"/>
<dbReference type="HOGENOM" id="CLU_034692_1_0_1"/>
<dbReference type="InParanoid" id="Q9LJB9"/>
<dbReference type="OMA" id="HFRIDEM"/>
<dbReference type="PhylomeDB" id="Q9LJB9"/>
<dbReference type="PRO" id="PR:Q9LJB9"/>
<dbReference type="Proteomes" id="UP000006548">
    <property type="component" value="Chromosome 3"/>
</dbReference>
<dbReference type="ExpressionAtlas" id="Q9LJB9">
    <property type="expression patterns" value="baseline and differential"/>
</dbReference>
<dbReference type="Gene3D" id="1.20.1280.50">
    <property type="match status" value="1"/>
</dbReference>
<dbReference type="InterPro" id="IPR006527">
    <property type="entry name" value="F-box-assoc_dom_typ1"/>
</dbReference>
<dbReference type="InterPro" id="IPR017451">
    <property type="entry name" value="F-box-assoc_interact_dom"/>
</dbReference>
<dbReference type="InterPro" id="IPR036047">
    <property type="entry name" value="F-box-like_dom_sf"/>
</dbReference>
<dbReference type="InterPro" id="IPR001810">
    <property type="entry name" value="F-box_dom"/>
</dbReference>
<dbReference type="InterPro" id="IPR050796">
    <property type="entry name" value="SCF_F-box_component"/>
</dbReference>
<dbReference type="NCBIfam" id="TIGR01640">
    <property type="entry name" value="F_box_assoc_1"/>
    <property type="match status" value="1"/>
</dbReference>
<dbReference type="PANTHER" id="PTHR31672">
    <property type="entry name" value="BNACNNG10540D PROTEIN"/>
    <property type="match status" value="1"/>
</dbReference>
<dbReference type="PANTHER" id="PTHR31672:SF13">
    <property type="entry name" value="F-BOX PROTEIN CPR30-LIKE"/>
    <property type="match status" value="1"/>
</dbReference>
<dbReference type="Pfam" id="PF00646">
    <property type="entry name" value="F-box"/>
    <property type="match status" value="1"/>
</dbReference>
<dbReference type="Pfam" id="PF07734">
    <property type="entry name" value="FBA_1"/>
    <property type="match status" value="1"/>
</dbReference>
<dbReference type="SMART" id="SM00256">
    <property type="entry name" value="FBOX"/>
    <property type="match status" value="1"/>
</dbReference>
<dbReference type="SUPFAM" id="SSF81383">
    <property type="entry name" value="F-box domain"/>
    <property type="match status" value="1"/>
</dbReference>
<dbReference type="PROSITE" id="PS50181">
    <property type="entry name" value="FBOX"/>
    <property type="match status" value="1"/>
</dbReference>
<gene>
    <name type="ordered locus">At3g21130</name>
    <name type="ORF">MSA6.17</name>
</gene>
<accession>Q9LJB9</accession>
<reference key="1">
    <citation type="journal article" date="2000" name="DNA Res.">
        <title>Structural analysis of Arabidopsis thaliana chromosome 3. II. Sequence features of the 4,251,695 bp regions covered by 90 P1, TAC and BAC clones.</title>
        <authorList>
            <person name="Kaneko T."/>
            <person name="Katoh T."/>
            <person name="Sato S."/>
            <person name="Nakamura Y."/>
            <person name="Asamizu E."/>
            <person name="Tabata S."/>
        </authorList>
    </citation>
    <scope>NUCLEOTIDE SEQUENCE [LARGE SCALE GENOMIC DNA]</scope>
    <source>
        <strain>cv. Columbia</strain>
    </source>
</reference>
<reference key="2">
    <citation type="journal article" date="2017" name="Plant J.">
        <title>Araport11: a complete reannotation of the Arabidopsis thaliana reference genome.</title>
        <authorList>
            <person name="Cheng C.Y."/>
            <person name="Krishnakumar V."/>
            <person name="Chan A.P."/>
            <person name="Thibaud-Nissen F."/>
            <person name="Schobel S."/>
            <person name="Town C.D."/>
        </authorList>
    </citation>
    <scope>GENOME REANNOTATION</scope>
    <source>
        <strain>cv. Columbia</strain>
    </source>
</reference>
<feature type="chain" id="PRO_0000283441" description="Putative F-box protein At3g21130">
    <location>
        <begin position="1"/>
        <end position="367"/>
    </location>
</feature>
<feature type="domain" description="F-box" evidence="1">
    <location>
        <begin position="4"/>
        <end position="50"/>
    </location>
</feature>
<name>FB171_ARATH</name>